<sequence length="1304" mass="152212">MNNEDSLSYSFGRMMLNQQQHHHQQQNNTQVQQQQQQHTTQFNQVRFGGNYHQQHQQQQHHQQQHHQQQQQQQQQQQQQQQHPQQYISPTFSYVHNNSNTSITHGNLYDIDDNQIDNVNIIRGGNRGYYNQQQQQHQHQQQQYYHEQQQQHFNINNNNNNSNNNNNNNNNNNNNNNNNNNNNNNNNNNNNNNSSLITNSHHAQRIVSPIVNGMTSSSGSNMMINDVSFGMNGISSINGISINNGSGDIDEEDDKLLDEQQQLLQRSLERLSDGEEISFGNPNYFFHPFSERNINGLPSTNSSIVSRQQQLQQQQQKLKLKSSPSPISPFFYTQQQQQQQQQQQQQQQQQQQQQQQQQQQQQQQQQQQQNTSINGIIKIDQTPPTPQYIANPSVSPLNAPISSPVLGDIYSGNNNNNNINTNNYRQQQKLNTSTGSYQNMSFDAGVNGFNWSPSLQPDQSTSTNHTQAMLQQQQQRQQQQQQQTQNLVYLNNQQIKSTVTSNRDHWSSVVKPPPIQLQQNSMQQNPIQQQQQQQQQQQQQSLLQHQQMLQMQMQIQQQQQQQQQQQQQQQQQQNQQQNQQQNQQQNQQQNQQHYPNQHHGQHQHNQHNQHHNQHHNQSHPNHKNQHQKQNQTQQSTQQQQQQQQNVQTSTTQSPLLQQSQQPQQQQPPTSNQRQQQQHNNNTNNVTTINNQTNINIINNDSDNEELLTTVNHSKPPPNESKRGELVESPVSKQQYKHFIKQFKLKEKEGLEIAMEFAFQSLSVLPEKVHWRVYLELADLANRQNNLKLARKFYRKVTSTQPYISQGWLEYAKMEEDYGRLEKCQKILQLGLKHCPFNESLLIKGIRHEEKMDNLEGARALLSQLRDQSIYKTWRAVMEGGLLEARAGNIDVARKIFKYLMKHVPWYGPIYQEAYKLEERCEEYERAINIVEKGLFEDPKYGPLWFSALRLYEKTSHGFLQSTRNTVERARQAVSREVTWKIYFEAAQIEERSKNLTLSRAAYVKSVELCPENLLWKVWLGGSRTELNADNICIARKLVFRALEEVPSKLRSLVLLEYSRLEEYAGNINKSRRILKMAHVEARLDWKVFLESVLLEMRANNYEAAIKEAKESLKIHSGAGRLWAALIQLNQLKGVKSQLNVFKKALQFVPKSGEVWCEGARIALNNNELREARRFLEFAIQFTPQFGDSFIELLRLEIMEKGPNCDISKLEQLCINADPNYGFMWLHCTVCVLDSSRQVLRNAKKLLLEMTQPKEQYLEEKKPEYGSCWVGSDGVLSLNRVFRNDFNNMSNQEKRKALFGSDVVKP</sequence>
<name>Y8236_DICDI</name>
<protein>
    <recommendedName>
        <fullName>TPR-containing protein DDB_G0280363</fullName>
    </recommendedName>
</protein>
<feature type="chain" id="PRO_0000352480" description="TPR-containing protein DDB_G0280363">
    <location>
        <begin position="1"/>
        <end position="1304"/>
    </location>
</feature>
<feature type="repeat" description="TPR 1">
    <location>
        <begin position="769"/>
        <end position="802"/>
    </location>
</feature>
<feature type="repeat" description="TPR 2">
    <location>
        <begin position="899"/>
        <end position="932"/>
    </location>
</feature>
<feature type="repeat" description="TPR 3">
    <location>
        <begin position="978"/>
        <end position="1011"/>
    </location>
</feature>
<feature type="repeat" description="TPR 4">
    <location>
        <begin position="1046"/>
        <end position="1079"/>
    </location>
</feature>
<feature type="repeat" description="TPR 5">
    <location>
        <begin position="1084"/>
        <end position="1111"/>
    </location>
</feature>
<feature type="repeat" description="TPR 6">
    <location>
        <begin position="1112"/>
        <end position="1150"/>
    </location>
</feature>
<feature type="repeat" description="TPR 7">
    <location>
        <begin position="1152"/>
        <end position="1184"/>
    </location>
</feature>
<feature type="region of interest" description="Disordered" evidence="1">
    <location>
        <begin position="19"/>
        <end position="85"/>
    </location>
</feature>
<feature type="region of interest" description="Disordered" evidence="1">
    <location>
        <begin position="153"/>
        <end position="195"/>
    </location>
</feature>
<feature type="region of interest" description="Disordered" evidence="1">
    <location>
        <begin position="296"/>
        <end position="334"/>
    </location>
</feature>
<feature type="region of interest" description="Disordered" evidence="1">
    <location>
        <begin position="447"/>
        <end position="477"/>
    </location>
</feature>
<feature type="region of interest" description="Disordered" evidence="1">
    <location>
        <begin position="576"/>
        <end position="687"/>
    </location>
</feature>
<feature type="region of interest" description="Disordered" evidence="1">
    <location>
        <begin position="706"/>
        <end position="728"/>
    </location>
</feature>
<feature type="compositionally biased region" description="Low complexity" evidence="1">
    <location>
        <begin position="25"/>
        <end position="44"/>
    </location>
</feature>
<feature type="compositionally biased region" description="Low complexity" evidence="1">
    <location>
        <begin position="52"/>
        <end position="85"/>
    </location>
</feature>
<feature type="compositionally biased region" description="Low complexity" evidence="1">
    <location>
        <begin position="153"/>
        <end position="194"/>
    </location>
</feature>
<feature type="compositionally biased region" description="Polar residues" evidence="1">
    <location>
        <begin position="296"/>
        <end position="306"/>
    </location>
</feature>
<feature type="compositionally biased region" description="Low complexity" evidence="1">
    <location>
        <begin position="307"/>
        <end position="316"/>
    </location>
</feature>
<feature type="compositionally biased region" description="Polar residues" evidence="1">
    <location>
        <begin position="448"/>
        <end position="465"/>
    </location>
</feature>
<feature type="compositionally biased region" description="Low complexity" evidence="1">
    <location>
        <begin position="466"/>
        <end position="477"/>
    </location>
</feature>
<feature type="compositionally biased region" description="Low complexity" evidence="1">
    <location>
        <begin position="576"/>
        <end position="597"/>
    </location>
</feature>
<feature type="compositionally biased region" description="Basic residues" evidence="1">
    <location>
        <begin position="598"/>
        <end position="625"/>
    </location>
</feature>
<feature type="compositionally biased region" description="Low complexity" evidence="1">
    <location>
        <begin position="626"/>
        <end position="687"/>
    </location>
</feature>
<dbReference type="EMBL" id="AAFI02000036">
    <property type="protein sequence ID" value="EAL67239.1"/>
    <property type="status" value="ALT_SEQ"/>
    <property type="molecule type" value="Genomic_DNA"/>
</dbReference>
<dbReference type="EMBL" id="AAFI02000035">
    <property type="protein sequence ID" value="EAL67408.1"/>
    <property type="status" value="ALT_SEQ"/>
    <property type="molecule type" value="Genomic_DNA"/>
</dbReference>
<dbReference type="RefSeq" id="XP_641155.1">
    <property type="nucleotide sequence ID" value="XM_636063.1"/>
</dbReference>
<dbReference type="RefSeq" id="XP_641400.1">
    <property type="nucleotide sequence ID" value="XM_636308.1"/>
</dbReference>
<dbReference type="SMR" id="Q54VF4"/>
<dbReference type="FunCoup" id="Q54VF4">
    <property type="interactions" value="161"/>
</dbReference>
<dbReference type="STRING" id="44689.Q54VF4"/>
<dbReference type="GlyGen" id="Q54VF4">
    <property type="glycosylation" value="1 site"/>
</dbReference>
<dbReference type="PaxDb" id="44689-DDB0206543"/>
<dbReference type="EnsemblProtists" id="EAL67239">
    <property type="protein sequence ID" value="EAL67239"/>
    <property type="gene ID" value="DDB_G0280519"/>
</dbReference>
<dbReference type="EnsemblProtists" id="EAL67408">
    <property type="protein sequence ID" value="EAL67408"/>
    <property type="gene ID" value="DDB_G0280363"/>
</dbReference>
<dbReference type="GeneID" id="8622534"/>
<dbReference type="KEGG" id="ddi:DDB_G0280363"/>
<dbReference type="KEGG" id="ddi:DDB_G0280519"/>
<dbReference type="dictyBase" id="DDB_G0280363"/>
<dbReference type="VEuPathDB" id="AmoebaDB:DDB_G0280363"/>
<dbReference type="VEuPathDB" id="AmoebaDB:DDB_G0280519"/>
<dbReference type="eggNOG" id="KOG0495">
    <property type="taxonomic scope" value="Eukaryota"/>
</dbReference>
<dbReference type="InParanoid" id="Q54VF4"/>
<dbReference type="PRO" id="PR:Q54VF4"/>
<dbReference type="Proteomes" id="UP000002195">
    <property type="component" value="Chromosome 3"/>
</dbReference>
<dbReference type="GO" id="GO:0000398">
    <property type="term" value="P:mRNA splicing, via spliceosome"/>
    <property type="evidence" value="ECO:0000318"/>
    <property type="project" value="GO_Central"/>
</dbReference>
<dbReference type="FunFam" id="1.25.40.10:FF:001931">
    <property type="entry name" value="TPR-containing protein DDB_G0280363"/>
    <property type="match status" value="1"/>
</dbReference>
<dbReference type="FunFam" id="1.25.40.10:FF:001948">
    <property type="entry name" value="TPR-containing protein DDB_G0280363"/>
    <property type="match status" value="1"/>
</dbReference>
<dbReference type="Gene3D" id="1.25.40.10">
    <property type="entry name" value="Tetratricopeptide repeat domain"/>
    <property type="match status" value="3"/>
</dbReference>
<dbReference type="InterPro" id="IPR003107">
    <property type="entry name" value="HAT"/>
</dbReference>
<dbReference type="InterPro" id="IPR045075">
    <property type="entry name" value="Syf1-like"/>
</dbReference>
<dbReference type="InterPro" id="IPR011990">
    <property type="entry name" value="TPR-like_helical_dom_sf"/>
</dbReference>
<dbReference type="InterPro" id="IPR019734">
    <property type="entry name" value="TPR_rpt"/>
</dbReference>
<dbReference type="PANTHER" id="PTHR11246">
    <property type="entry name" value="PRE-MRNA SPLICING FACTOR"/>
    <property type="match status" value="1"/>
</dbReference>
<dbReference type="PANTHER" id="PTHR11246:SF20">
    <property type="entry name" value="TPR-CONTAINING PROTEIN DDB_G0280363"/>
    <property type="match status" value="1"/>
</dbReference>
<dbReference type="SMART" id="SM00386">
    <property type="entry name" value="HAT"/>
    <property type="match status" value="5"/>
</dbReference>
<dbReference type="SMART" id="SM00028">
    <property type="entry name" value="TPR"/>
    <property type="match status" value="4"/>
</dbReference>
<dbReference type="SUPFAM" id="SSF48452">
    <property type="entry name" value="TPR-like"/>
    <property type="match status" value="3"/>
</dbReference>
<proteinExistence type="predicted"/>
<gene>
    <name type="ORF">DDB_G0280363</name>
</gene>
<accession>Q54VF4</accession>
<accession>Q54VF5</accession>
<organism>
    <name type="scientific">Dictyostelium discoideum</name>
    <name type="common">Social amoeba</name>
    <dbReference type="NCBI Taxonomy" id="44689"/>
    <lineage>
        <taxon>Eukaryota</taxon>
        <taxon>Amoebozoa</taxon>
        <taxon>Evosea</taxon>
        <taxon>Eumycetozoa</taxon>
        <taxon>Dictyostelia</taxon>
        <taxon>Dictyosteliales</taxon>
        <taxon>Dictyosteliaceae</taxon>
        <taxon>Dictyostelium</taxon>
    </lineage>
</organism>
<keyword id="KW-1185">Reference proteome</keyword>
<keyword id="KW-0677">Repeat</keyword>
<keyword id="KW-0802">TPR repeat</keyword>
<comment type="sequence caution" evidence="2">
    <conflict type="erroneous gene model prediction">
        <sequence resource="EMBL-CDS" id="EAL67239"/>
    </conflict>
</comment>
<comment type="sequence caution" evidence="2">
    <conflict type="erroneous gene model prediction">
        <sequence resource="EMBL-CDS" id="EAL67408"/>
    </conflict>
</comment>
<evidence type="ECO:0000256" key="1">
    <source>
        <dbReference type="SAM" id="MobiDB-lite"/>
    </source>
</evidence>
<evidence type="ECO:0000305" key="2"/>
<reference key="1">
    <citation type="journal article" date="2005" name="Nature">
        <title>The genome of the social amoeba Dictyostelium discoideum.</title>
        <authorList>
            <person name="Eichinger L."/>
            <person name="Pachebat J.A."/>
            <person name="Gloeckner G."/>
            <person name="Rajandream M.A."/>
            <person name="Sucgang R."/>
            <person name="Berriman M."/>
            <person name="Song J."/>
            <person name="Olsen R."/>
            <person name="Szafranski K."/>
            <person name="Xu Q."/>
            <person name="Tunggal B."/>
            <person name="Kummerfeld S."/>
            <person name="Madera M."/>
            <person name="Konfortov B.A."/>
            <person name="Rivero F."/>
            <person name="Bankier A.T."/>
            <person name="Lehmann R."/>
            <person name="Hamlin N."/>
            <person name="Davies R."/>
            <person name="Gaudet P."/>
            <person name="Fey P."/>
            <person name="Pilcher K."/>
            <person name="Chen G."/>
            <person name="Saunders D."/>
            <person name="Sodergren E.J."/>
            <person name="Davis P."/>
            <person name="Kerhornou A."/>
            <person name="Nie X."/>
            <person name="Hall N."/>
            <person name="Anjard C."/>
            <person name="Hemphill L."/>
            <person name="Bason N."/>
            <person name="Farbrother P."/>
            <person name="Desany B."/>
            <person name="Just E."/>
            <person name="Morio T."/>
            <person name="Rost R."/>
            <person name="Churcher C.M."/>
            <person name="Cooper J."/>
            <person name="Haydock S."/>
            <person name="van Driessche N."/>
            <person name="Cronin A."/>
            <person name="Goodhead I."/>
            <person name="Muzny D.M."/>
            <person name="Mourier T."/>
            <person name="Pain A."/>
            <person name="Lu M."/>
            <person name="Harper D."/>
            <person name="Lindsay R."/>
            <person name="Hauser H."/>
            <person name="James K.D."/>
            <person name="Quiles M."/>
            <person name="Madan Babu M."/>
            <person name="Saito T."/>
            <person name="Buchrieser C."/>
            <person name="Wardroper A."/>
            <person name="Felder M."/>
            <person name="Thangavelu M."/>
            <person name="Johnson D."/>
            <person name="Knights A."/>
            <person name="Loulseged H."/>
            <person name="Mungall K.L."/>
            <person name="Oliver K."/>
            <person name="Price C."/>
            <person name="Quail M.A."/>
            <person name="Urushihara H."/>
            <person name="Hernandez J."/>
            <person name="Rabbinowitsch E."/>
            <person name="Steffen D."/>
            <person name="Sanders M."/>
            <person name="Ma J."/>
            <person name="Kohara Y."/>
            <person name="Sharp S."/>
            <person name="Simmonds M.N."/>
            <person name="Spiegler S."/>
            <person name="Tivey A."/>
            <person name="Sugano S."/>
            <person name="White B."/>
            <person name="Walker D."/>
            <person name="Woodward J.R."/>
            <person name="Winckler T."/>
            <person name="Tanaka Y."/>
            <person name="Shaulsky G."/>
            <person name="Schleicher M."/>
            <person name="Weinstock G.M."/>
            <person name="Rosenthal A."/>
            <person name="Cox E.C."/>
            <person name="Chisholm R.L."/>
            <person name="Gibbs R.A."/>
            <person name="Loomis W.F."/>
            <person name="Platzer M."/>
            <person name="Kay R.R."/>
            <person name="Williams J.G."/>
            <person name="Dear P.H."/>
            <person name="Noegel A.A."/>
            <person name="Barrell B.G."/>
            <person name="Kuspa A."/>
        </authorList>
    </citation>
    <scope>NUCLEOTIDE SEQUENCE [LARGE SCALE GENOMIC DNA]</scope>
    <source>
        <strain>AX4</strain>
    </source>
</reference>